<organism>
    <name type="scientific">Vibrio vulnificus (strain CMCP6)</name>
    <dbReference type="NCBI Taxonomy" id="216895"/>
    <lineage>
        <taxon>Bacteria</taxon>
        <taxon>Pseudomonadati</taxon>
        <taxon>Pseudomonadota</taxon>
        <taxon>Gammaproteobacteria</taxon>
        <taxon>Vibrionales</taxon>
        <taxon>Vibrionaceae</taxon>
        <taxon>Vibrio</taxon>
    </lineage>
</organism>
<protein>
    <recommendedName>
        <fullName>3-octaprenyl-4-hydroxybenzoate carboxy-lyase</fullName>
        <ecNumber>4.1.1.-</ecNumber>
    </recommendedName>
    <alternativeName>
        <fullName>Polyprenyl p-hydroxybenzoate decarboxylase</fullName>
    </alternativeName>
</protein>
<name>UBID_VIBVU</name>
<keyword id="KW-1003">Cell membrane</keyword>
<keyword id="KW-0210">Decarboxylase</keyword>
<keyword id="KW-0456">Lyase</keyword>
<keyword id="KW-0472">Membrane</keyword>
<keyword id="KW-0831">Ubiquinone biosynthesis</keyword>
<dbReference type="EC" id="4.1.1.-"/>
<dbReference type="EMBL" id="AE016795">
    <property type="protein sequence ID" value="AAO09432.1"/>
    <property type="molecule type" value="Genomic_DNA"/>
</dbReference>
<dbReference type="RefSeq" id="WP_011078984.1">
    <property type="nucleotide sequence ID" value="NC_004459.3"/>
</dbReference>
<dbReference type="SMR" id="Q8DDP0"/>
<dbReference type="KEGG" id="vvu:VV1_0935"/>
<dbReference type="HOGENOM" id="CLU_023348_4_0_6"/>
<dbReference type="UniPathway" id="UPA00232"/>
<dbReference type="Proteomes" id="UP000002275">
    <property type="component" value="Chromosome 1"/>
</dbReference>
<dbReference type="GO" id="GO:0005829">
    <property type="term" value="C:cytosol"/>
    <property type="evidence" value="ECO:0007669"/>
    <property type="project" value="TreeGrafter"/>
</dbReference>
<dbReference type="GO" id="GO:0005886">
    <property type="term" value="C:plasma membrane"/>
    <property type="evidence" value="ECO:0007669"/>
    <property type="project" value="UniProtKB-SubCell"/>
</dbReference>
<dbReference type="GO" id="GO:0008694">
    <property type="term" value="F:3-octaprenyl-4-hydroxybenzoate carboxy-lyase activity"/>
    <property type="evidence" value="ECO:0007669"/>
    <property type="project" value="TreeGrafter"/>
</dbReference>
<dbReference type="GO" id="GO:0006744">
    <property type="term" value="P:ubiquinone biosynthetic process"/>
    <property type="evidence" value="ECO:0007669"/>
    <property type="project" value="UniProtKB-UniPathway"/>
</dbReference>
<dbReference type="FunFam" id="3.40.1670.10:FF:000001">
    <property type="entry name" value="3-octaprenyl-4-hydroxybenzoate carboxy-lyase"/>
    <property type="match status" value="1"/>
</dbReference>
<dbReference type="Gene3D" id="1.20.5.570">
    <property type="entry name" value="Single helix bin"/>
    <property type="match status" value="1"/>
</dbReference>
<dbReference type="Gene3D" id="3.40.1670.10">
    <property type="entry name" value="UbiD C-terminal domain-like"/>
    <property type="match status" value="2"/>
</dbReference>
<dbReference type="InterPro" id="IPR002830">
    <property type="entry name" value="UbiD"/>
</dbReference>
<dbReference type="InterPro" id="IPR049381">
    <property type="entry name" value="UbiD-like_C"/>
</dbReference>
<dbReference type="InterPro" id="IPR049383">
    <property type="entry name" value="UbiD-like_N"/>
</dbReference>
<dbReference type="InterPro" id="IPR048304">
    <property type="entry name" value="UbiD_Rift_dom"/>
</dbReference>
<dbReference type="NCBIfam" id="NF008175">
    <property type="entry name" value="PRK10922.1"/>
    <property type="match status" value="1"/>
</dbReference>
<dbReference type="NCBIfam" id="TIGR00148">
    <property type="entry name" value="UbiD family decarboxylase"/>
    <property type="match status" value="1"/>
</dbReference>
<dbReference type="PANTHER" id="PTHR30108">
    <property type="entry name" value="3-OCTAPRENYL-4-HYDROXYBENZOATE CARBOXY-LYASE-RELATED"/>
    <property type="match status" value="1"/>
</dbReference>
<dbReference type="PANTHER" id="PTHR30108:SF17">
    <property type="entry name" value="FERULIC ACID DECARBOXYLASE 1"/>
    <property type="match status" value="1"/>
</dbReference>
<dbReference type="Pfam" id="PF01977">
    <property type="entry name" value="UbiD"/>
    <property type="match status" value="1"/>
</dbReference>
<dbReference type="Pfam" id="PF20696">
    <property type="entry name" value="UbiD_C"/>
    <property type="match status" value="2"/>
</dbReference>
<dbReference type="Pfam" id="PF20695">
    <property type="entry name" value="UbiD_N"/>
    <property type="match status" value="1"/>
</dbReference>
<dbReference type="SUPFAM" id="SSF50475">
    <property type="entry name" value="FMN-binding split barrel"/>
    <property type="match status" value="1"/>
</dbReference>
<dbReference type="SUPFAM" id="SSF143968">
    <property type="entry name" value="UbiD C-terminal domain-like"/>
    <property type="match status" value="2"/>
</dbReference>
<feature type="chain" id="PRO_0000267707" description="3-octaprenyl-4-hydroxybenzoate carboxy-lyase">
    <location>
        <begin position="1"/>
        <end position="617"/>
    </location>
</feature>
<feature type="region of interest" description="Unknown insert">
    <location>
        <begin position="460"/>
        <end position="588"/>
    </location>
</feature>
<accession>Q8DDP0</accession>
<proteinExistence type="inferred from homology"/>
<reference key="1">
    <citation type="submission" date="2002-12" db="EMBL/GenBank/DDBJ databases">
        <title>Complete genome sequence of Vibrio vulnificus CMCP6.</title>
        <authorList>
            <person name="Rhee J.H."/>
            <person name="Kim S.Y."/>
            <person name="Chung S.S."/>
            <person name="Kim J.J."/>
            <person name="Moon Y.H."/>
            <person name="Jeong H."/>
            <person name="Choy H.E."/>
        </authorList>
    </citation>
    <scope>NUCLEOTIDE SEQUENCE [LARGE SCALE GENOMIC DNA]</scope>
    <source>
        <strain>CMCP6</strain>
    </source>
</reference>
<evidence type="ECO:0000250" key="1"/>
<evidence type="ECO:0000305" key="2"/>
<comment type="function">
    <text evidence="1">Catalyzes the decarboxylation of 3-octaprenyl-4-hydroxy benzoate to 2-octaprenylphenol.</text>
</comment>
<comment type="cofactor">
    <cofactor evidence="1">
        <name>a divalent metal cation</name>
        <dbReference type="ChEBI" id="CHEBI:60240"/>
    </cofactor>
</comment>
<comment type="pathway">
    <text>Cofactor biosynthesis; ubiquinone biosynthesis.</text>
</comment>
<comment type="subunit">
    <text evidence="1">Homohexamer.</text>
</comment>
<comment type="subcellular location">
    <subcellularLocation>
        <location evidence="1">Cell membrane</location>
        <topology evidence="1">Peripheral membrane protein</topology>
    </subcellularLocation>
</comment>
<comment type="similarity">
    <text evidence="2">Belongs to the UbiD family.</text>
</comment>
<sequence>MSFKDLRDFLNHLEKKGQLKRITHPVDPAYEMTEISDRTLRAGGPALLFENPIGYDIPVLTNLFGTAERVAMGMGREQVKELREVGQWLAYLKEPEPPKGFKDALDKLPVFKQVLNMPVKRLRKAACQEVVWQGEEVDLDKIPVMSCWQDDVAPLLTWGLTITRGPNKKRQNLGIYRQQKIAKNKIIMRWLAHRGGALDLRDWMEKYPGKPFPVSVAFGADPATILGAVTPVPDTLSEYAFAGLLRGSKTEVVKSVSNDLEIPASAEIVLEGYIDPNEYADEGPYGDHTGYYNEKEKHHVFTITHITMRKEPIYHSTYTGRPPDEPAVLGVALNEVFVPILQKQFPEIEDFYLPPEGCSYRMAVVTMKKQYPGHAKRVMMGVWSFLRQFMYTKYVVVCDESVNARDWDDVVKAMTENMNPILDSLFIESTPIDSLDFASPVAGLGSKMGLDATIKWEAELALQGATVSTEFASQIGIDVNALKAVHPLISDIYVPAVASGQFMVVKINKTHAGQCKEVVESLWQVESVKQRNKFIVVCDDDVKADDWHDIIWAITTRMDPARDTLKIDGSESCSAKLVFDATNKYPEEITREWGKPIKKDPKLVAKVDALWQEFGIL</sequence>
<gene>
    <name type="primary">ubiD</name>
    <name type="ordered locus">VV1_0935</name>
</gene>